<protein>
    <recommendedName>
        <fullName evidence="5">Receptor-like protein 48</fullName>
        <shortName evidence="5">AtRLP48</shortName>
    </recommendedName>
</protein>
<organism>
    <name type="scientific">Arabidopsis thaliana</name>
    <name type="common">Mouse-ear cress</name>
    <dbReference type="NCBI Taxonomy" id="3702"/>
    <lineage>
        <taxon>Eukaryota</taxon>
        <taxon>Viridiplantae</taxon>
        <taxon>Streptophyta</taxon>
        <taxon>Embryophyta</taxon>
        <taxon>Tracheophyta</taxon>
        <taxon>Spermatophyta</taxon>
        <taxon>Magnoliopsida</taxon>
        <taxon>eudicotyledons</taxon>
        <taxon>Gunneridae</taxon>
        <taxon>Pentapetalae</taxon>
        <taxon>rosids</taxon>
        <taxon>malvids</taxon>
        <taxon>Brassicales</taxon>
        <taxon>Brassicaceae</taxon>
        <taxon>Camelineae</taxon>
        <taxon>Arabidopsis</taxon>
    </lineage>
</organism>
<accession>F4JTU7</accession>
<accession>Q9SVM5</accession>
<feature type="signal peptide" evidence="1">
    <location>
        <begin position="1"/>
        <end position="30"/>
    </location>
</feature>
<feature type="chain" id="PRO_5003315520" description="Receptor-like protein 48">
    <location>
        <begin position="31"/>
        <end position="813"/>
    </location>
</feature>
<feature type="topological domain" description="Extracellular" evidence="1">
    <location>
        <begin position="31"/>
        <end position="786"/>
    </location>
</feature>
<feature type="transmembrane region" description="Helical" evidence="1">
    <location>
        <begin position="787"/>
        <end position="807"/>
    </location>
</feature>
<feature type="topological domain" description="Cytoplasmic" evidence="1">
    <location>
        <begin position="808"/>
        <end position="813"/>
    </location>
</feature>
<feature type="repeat" description="LRR 1" evidence="1">
    <location>
        <begin position="111"/>
        <end position="134"/>
    </location>
</feature>
<feature type="repeat" description="LRR 2" evidence="1">
    <location>
        <begin position="136"/>
        <end position="159"/>
    </location>
</feature>
<feature type="repeat" description="LRR 3" evidence="1">
    <location>
        <begin position="160"/>
        <end position="182"/>
    </location>
</feature>
<feature type="repeat" description="LRR 4" evidence="1">
    <location>
        <begin position="196"/>
        <end position="219"/>
    </location>
</feature>
<feature type="repeat" description="LRR 5" evidence="1">
    <location>
        <begin position="220"/>
        <end position="244"/>
    </location>
</feature>
<feature type="repeat" description="LRR 6" evidence="1">
    <location>
        <begin position="245"/>
        <end position="260"/>
    </location>
</feature>
<feature type="repeat" description="LRR 7" evidence="1">
    <location>
        <begin position="261"/>
        <end position="285"/>
    </location>
</feature>
<feature type="repeat" description="LRR 8" evidence="1">
    <location>
        <begin position="288"/>
        <end position="310"/>
    </location>
</feature>
<feature type="repeat" description="LRR 9" evidence="1">
    <location>
        <begin position="311"/>
        <end position="335"/>
    </location>
</feature>
<feature type="repeat" description="LRR 10" evidence="1">
    <location>
        <begin position="336"/>
        <end position="359"/>
    </location>
</feature>
<feature type="repeat" description="LRR 11" evidence="1">
    <location>
        <begin position="361"/>
        <end position="381"/>
    </location>
</feature>
<feature type="repeat" description="LRR 12" evidence="1">
    <location>
        <begin position="382"/>
        <end position="405"/>
    </location>
</feature>
<feature type="repeat" description="LRR 13" evidence="1">
    <location>
        <begin position="406"/>
        <end position="432"/>
    </location>
</feature>
<feature type="repeat" description="LRR 14" evidence="1">
    <location>
        <begin position="434"/>
        <end position="450"/>
    </location>
</feature>
<feature type="repeat" description="LRR 15" evidence="1">
    <location>
        <begin position="451"/>
        <end position="473"/>
    </location>
</feature>
<feature type="repeat" description="LRR 16" evidence="1">
    <location>
        <begin position="475"/>
        <end position="498"/>
    </location>
</feature>
<feature type="repeat" description="LRR 17" evidence="1">
    <location>
        <begin position="500"/>
        <end position="521"/>
    </location>
</feature>
<feature type="repeat" description="LRR 18" evidence="1">
    <location>
        <begin position="523"/>
        <end position="544"/>
    </location>
</feature>
<feature type="repeat" description="LRR 19" evidence="1">
    <location>
        <begin position="545"/>
        <end position="571"/>
    </location>
</feature>
<feature type="repeat" description="LRR 20" evidence="1">
    <location>
        <begin position="572"/>
        <end position="595"/>
    </location>
</feature>
<feature type="repeat" description="LRR 21" evidence="1">
    <location>
        <begin position="642"/>
        <end position="666"/>
    </location>
</feature>
<feature type="repeat" description="LRR 22" evidence="1">
    <location>
        <begin position="667"/>
        <end position="690"/>
    </location>
</feature>
<feature type="repeat" description="LRR 23" evidence="1">
    <location>
        <begin position="691"/>
        <end position="714"/>
    </location>
</feature>
<feature type="repeat" description="LRR 24" evidence="1">
    <location>
        <begin position="716"/>
        <end position="739"/>
    </location>
</feature>
<feature type="region of interest" description="Disordered" evidence="3">
    <location>
        <begin position="756"/>
        <end position="785"/>
    </location>
</feature>
<feature type="compositionally biased region" description="Acidic residues" evidence="3">
    <location>
        <begin position="763"/>
        <end position="781"/>
    </location>
</feature>
<feature type="glycosylation site" description="N-linked (GlcNAc...) asparagine" evidence="2">
    <location>
        <position position="69"/>
    </location>
</feature>
<feature type="glycosylation site" description="N-linked (GlcNAc...) asparagine" evidence="2">
    <location>
        <position position="105"/>
    </location>
</feature>
<feature type="glycosylation site" description="N-linked (GlcNAc...) asparagine" evidence="2">
    <location>
        <position position="123"/>
    </location>
</feature>
<feature type="glycosylation site" description="N-linked (GlcNAc...) asparagine" evidence="2">
    <location>
        <position position="195"/>
    </location>
</feature>
<feature type="glycosylation site" description="N-linked (GlcNAc...) asparagine" evidence="2">
    <location>
        <position position="216"/>
    </location>
</feature>
<feature type="glycosylation site" description="N-linked (GlcNAc...) asparagine" evidence="2">
    <location>
        <position position="248"/>
    </location>
</feature>
<feature type="glycosylation site" description="N-linked (GlcNAc...) asparagine" evidence="2">
    <location>
        <position position="257"/>
    </location>
</feature>
<feature type="glycosylation site" description="N-linked (GlcNAc...) asparagine" evidence="2">
    <location>
        <position position="380"/>
    </location>
</feature>
<feature type="glycosylation site" description="N-linked (GlcNAc...) asparagine" evidence="2">
    <location>
        <position position="484"/>
    </location>
</feature>
<feature type="glycosylation site" description="N-linked (GlcNAc...) asparagine" evidence="2">
    <location>
        <position position="673"/>
    </location>
</feature>
<feature type="glycosylation site" description="N-linked (GlcNAc...) asparagine" evidence="2">
    <location>
        <position position="689"/>
    </location>
</feature>
<feature type="glycosylation site" description="N-linked (GlcNAc...) asparagine" evidence="2">
    <location>
        <position position="721"/>
    </location>
</feature>
<feature type="glycosylation site" description="N-linked (GlcNAc...) asparagine" evidence="2">
    <location>
        <position position="741"/>
    </location>
</feature>
<name>RLP48_ARATH</name>
<proteinExistence type="inferred from homology"/>
<keyword id="KW-1003">Cell membrane</keyword>
<keyword id="KW-0325">Glycoprotein</keyword>
<keyword id="KW-0433">Leucine-rich repeat</keyword>
<keyword id="KW-0472">Membrane</keyword>
<keyword id="KW-0675">Receptor</keyword>
<keyword id="KW-1185">Reference proteome</keyword>
<keyword id="KW-0677">Repeat</keyword>
<keyword id="KW-0732">Signal</keyword>
<keyword id="KW-0812">Transmembrane</keyword>
<keyword id="KW-1133">Transmembrane helix</keyword>
<evidence type="ECO:0000255" key="1"/>
<evidence type="ECO:0000255" key="2">
    <source>
        <dbReference type="PROSITE-ProRule" id="PRU00498"/>
    </source>
</evidence>
<evidence type="ECO:0000256" key="3">
    <source>
        <dbReference type="SAM" id="MobiDB-lite"/>
    </source>
</evidence>
<evidence type="ECO:0000269" key="4">
    <source>
    </source>
</evidence>
<evidence type="ECO:0000303" key="5">
    <source>
    </source>
</evidence>
<evidence type="ECO:0000305" key="6"/>
<evidence type="ECO:0000312" key="7">
    <source>
        <dbReference type="Araport" id="AT4G13880"/>
    </source>
</evidence>
<evidence type="ECO:0000312" key="8">
    <source>
        <dbReference type="EMBL" id="CAB36852.1"/>
    </source>
</evidence>
<reference key="1">
    <citation type="journal article" date="1999" name="Nature">
        <title>Sequence and analysis of chromosome 4 of the plant Arabidopsis thaliana.</title>
        <authorList>
            <person name="Mayer K.F.X."/>
            <person name="Schueller C."/>
            <person name="Wambutt R."/>
            <person name="Murphy G."/>
            <person name="Volckaert G."/>
            <person name="Pohl T."/>
            <person name="Duesterhoeft A."/>
            <person name="Stiekema W."/>
            <person name="Entian K.-D."/>
            <person name="Terryn N."/>
            <person name="Harris B."/>
            <person name="Ansorge W."/>
            <person name="Brandt P."/>
            <person name="Grivell L.A."/>
            <person name="Rieger M."/>
            <person name="Weichselgartner M."/>
            <person name="de Simone V."/>
            <person name="Obermaier B."/>
            <person name="Mache R."/>
            <person name="Mueller M."/>
            <person name="Kreis M."/>
            <person name="Delseny M."/>
            <person name="Puigdomenech P."/>
            <person name="Watson M."/>
            <person name="Schmidtheini T."/>
            <person name="Reichert B."/>
            <person name="Portetelle D."/>
            <person name="Perez-Alonso M."/>
            <person name="Boutry M."/>
            <person name="Bancroft I."/>
            <person name="Vos P."/>
            <person name="Hoheisel J."/>
            <person name="Zimmermann W."/>
            <person name="Wedler H."/>
            <person name="Ridley P."/>
            <person name="Langham S.-A."/>
            <person name="McCullagh B."/>
            <person name="Bilham L."/>
            <person name="Robben J."/>
            <person name="van der Schueren J."/>
            <person name="Grymonprez B."/>
            <person name="Chuang Y.-J."/>
            <person name="Vandenbussche F."/>
            <person name="Braeken M."/>
            <person name="Weltjens I."/>
            <person name="Voet M."/>
            <person name="Bastiaens I."/>
            <person name="Aert R."/>
            <person name="Defoor E."/>
            <person name="Weitzenegger T."/>
            <person name="Bothe G."/>
            <person name="Ramsperger U."/>
            <person name="Hilbert H."/>
            <person name="Braun M."/>
            <person name="Holzer E."/>
            <person name="Brandt A."/>
            <person name="Peters S."/>
            <person name="van Staveren M."/>
            <person name="Dirkse W."/>
            <person name="Mooijman P."/>
            <person name="Klein Lankhorst R."/>
            <person name="Rose M."/>
            <person name="Hauf J."/>
            <person name="Koetter P."/>
            <person name="Berneiser S."/>
            <person name="Hempel S."/>
            <person name="Feldpausch M."/>
            <person name="Lamberth S."/>
            <person name="Van den Daele H."/>
            <person name="De Keyser A."/>
            <person name="Buysshaert C."/>
            <person name="Gielen J."/>
            <person name="Villarroel R."/>
            <person name="De Clercq R."/>
            <person name="van Montagu M."/>
            <person name="Rogers J."/>
            <person name="Cronin A."/>
            <person name="Quail M.A."/>
            <person name="Bray-Allen S."/>
            <person name="Clark L."/>
            <person name="Doggett J."/>
            <person name="Hall S."/>
            <person name="Kay M."/>
            <person name="Lennard N."/>
            <person name="McLay K."/>
            <person name="Mayes R."/>
            <person name="Pettett A."/>
            <person name="Rajandream M.A."/>
            <person name="Lyne M."/>
            <person name="Benes V."/>
            <person name="Rechmann S."/>
            <person name="Borkova D."/>
            <person name="Bloecker H."/>
            <person name="Scharfe M."/>
            <person name="Grimm M."/>
            <person name="Loehnert T.-H."/>
            <person name="Dose S."/>
            <person name="de Haan M."/>
            <person name="Maarse A.C."/>
            <person name="Schaefer M."/>
            <person name="Mueller-Auer S."/>
            <person name="Gabel C."/>
            <person name="Fuchs M."/>
            <person name="Fartmann B."/>
            <person name="Granderath K."/>
            <person name="Dauner D."/>
            <person name="Herzl A."/>
            <person name="Neumann S."/>
            <person name="Argiriou A."/>
            <person name="Vitale D."/>
            <person name="Liguori R."/>
            <person name="Piravandi E."/>
            <person name="Massenet O."/>
            <person name="Quigley F."/>
            <person name="Clabauld G."/>
            <person name="Muendlein A."/>
            <person name="Felber R."/>
            <person name="Schnabl S."/>
            <person name="Hiller R."/>
            <person name="Schmidt W."/>
            <person name="Lecharny A."/>
            <person name="Aubourg S."/>
            <person name="Chefdor F."/>
            <person name="Cooke R."/>
            <person name="Berger C."/>
            <person name="Monfort A."/>
            <person name="Casacuberta E."/>
            <person name="Gibbons T."/>
            <person name="Weber N."/>
            <person name="Vandenbol M."/>
            <person name="Bargues M."/>
            <person name="Terol J."/>
            <person name="Torres A."/>
            <person name="Perez-Perez A."/>
            <person name="Purnelle B."/>
            <person name="Bent E."/>
            <person name="Johnson S."/>
            <person name="Tacon D."/>
            <person name="Jesse T."/>
            <person name="Heijnen L."/>
            <person name="Schwarz S."/>
            <person name="Scholler P."/>
            <person name="Heber S."/>
            <person name="Francs P."/>
            <person name="Bielke C."/>
            <person name="Frishman D."/>
            <person name="Haase D."/>
            <person name="Lemcke K."/>
            <person name="Mewes H.-W."/>
            <person name="Stocker S."/>
            <person name="Zaccaria P."/>
            <person name="Bevan M."/>
            <person name="Wilson R.K."/>
            <person name="de la Bastide M."/>
            <person name="Habermann K."/>
            <person name="Parnell L."/>
            <person name="Dedhia N."/>
            <person name="Gnoj L."/>
            <person name="Schutz K."/>
            <person name="Huang E."/>
            <person name="Spiegel L."/>
            <person name="Sekhon M."/>
            <person name="Murray J."/>
            <person name="Sheet P."/>
            <person name="Cordes M."/>
            <person name="Abu-Threideh J."/>
            <person name="Stoneking T."/>
            <person name="Kalicki J."/>
            <person name="Graves T."/>
            <person name="Harmon G."/>
            <person name="Edwards J."/>
            <person name="Latreille P."/>
            <person name="Courtney L."/>
            <person name="Cloud J."/>
            <person name="Abbott A."/>
            <person name="Scott K."/>
            <person name="Johnson D."/>
            <person name="Minx P."/>
            <person name="Bentley D."/>
            <person name="Fulton B."/>
            <person name="Miller N."/>
            <person name="Greco T."/>
            <person name="Kemp K."/>
            <person name="Kramer J."/>
            <person name="Fulton L."/>
            <person name="Mardis E."/>
            <person name="Dante M."/>
            <person name="Pepin K."/>
            <person name="Hillier L.W."/>
            <person name="Nelson J."/>
            <person name="Spieth J."/>
            <person name="Ryan E."/>
            <person name="Andrews S."/>
            <person name="Geisel C."/>
            <person name="Layman D."/>
            <person name="Du H."/>
            <person name="Ali J."/>
            <person name="Berghoff A."/>
            <person name="Jones K."/>
            <person name="Drone K."/>
            <person name="Cotton M."/>
            <person name="Joshu C."/>
            <person name="Antonoiu B."/>
            <person name="Zidanic M."/>
            <person name="Strong C."/>
            <person name="Sun H."/>
            <person name="Lamar B."/>
            <person name="Yordan C."/>
            <person name="Ma P."/>
            <person name="Zhong J."/>
            <person name="Preston R."/>
            <person name="Vil D."/>
            <person name="Shekher M."/>
            <person name="Matero A."/>
            <person name="Shah R."/>
            <person name="Swaby I.K."/>
            <person name="O'Shaughnessy A."/>
            <person name="Rodriguez M."/>
            <person name="Hoffman J."/>
            <person name="Till S."/>
            <person name="Granat S."/>
            <person name="Shohdy N."/>
            <person name="Hasegawa A."/>
            <person name="Hameed A."/>
            <person name="Lodhi M."/>
            <person name="Johnson A."/>
            <person name="Chen E."/>
            <person name="Marra M.A."/>
            <person name="Martienssen R."/>
            <person name="McCombie W.R."/>
        </authorList>
    </citation>
    <scope>NUCLEOTIDE SEQUENCE [LARGE SCALE GENOMIC DNA]</scope>
    <source>
        <strain>cv. Columbia</strain>
    </source>
</reference>
<reference key="2">
    <citation type="journal article" date="2017" name="Plant J.">
        <title>Araport11: a complete reannotation of the Arabidopsis thaliana reference genome.</title>
        <authorList>
            <person name="Cheng C.Y."/>
            <person name="Krishnakumar V."/>
            <person name="Chan A.P."/>
            <person name="Thibaud-Nissen F."/>
            <person name="Schobel S."/>
            <person name="Town C.D."/>
        </authorList>
    </citation>
    <scope>GENOME REANNOTATION</scope>
    <source>
        <strain>cv. Columbia</strain>
    </source>
</reference>
<reference key="3">
    <citation type="journal article" date="2005" name="Plant Physiol.">
        <title>Phylogenomic analysis of the receptor-like proteins of rice and Arabidopsis.</title>
        <authorList>
            <person name="Fritz-Laylin L.K."/>
            <person name="Krishnamurthy N."/>
            <person name="Toer M."/>
            <person name="Sjoelander K.V."/>
            <person name="Jones J.D."/>
        </authorList>
    </citation>
    <scope>GENE FAMILY</scope>
</reference>
<reference key="4">
    <citation type="journal article" date="2008" name="Plant Physiol.">
        <title>A genome-wide functional investigation into the roles of receptor-like proteins in Arabidopsis.</title>
        <authorList>
            <person name="Wang G."/>
            <person name="Ellendorff U."/>
            <person name="Kemp B."/>
            <person name="Mansfield J.W."/>
            <person name="Forsyth A."/>
            <person name="Mitchell K."/>
            <person name="Bastas K."/>
            <person name="Liu C.-M."/>
            <person name="Woods-Toer A."/>
            <person name="Zipfel C."/>
            <person name="de Wit P.J.G.M."/>
            <person name="Jones J.D.G."/>
            <person name="Toer M."/>
            <person name="Thomma B.P.H.J."/>
        </authorList>
    </citation>
    <scope>GENE FAMILY</scope>
    <scope>NOMENCLATURE</scope>
    <source>
        <strain>cv. Columbia</strain>
    </source>
</reference>
<reference key="5">
    <citation type="journal article" date="2015" name="PLoS ONE">
        <title>Uncovering genes and ploidy involved in the high diversity in root hair density, length and response to local scarce phosphate in Arabidopsis thaliana.</title>
        <authorList>
            <person name="Stetter M.G."/>
            <person name="Schmid K."/>
            <person name="Ludewig U."/>
        </authorList>
    </citation>
    <scope>FUNCTION</scope>
    <scope>DISRUPTION PHENOTYPE</scope>
</reference>
<gene>
    <name evidence="5" type="primary">RLP48</name>
    <name evidence="7" type="ordered locus">At4g13880</name>
    <name evidence="8" type="ORF">F18A5.270</name>
</gene>
<comment type="function">
    <text evidence="4">Plays a role in root hair development.</text>
</comment>
<comment type="subcellular location">
    <subcellularLocation>
        <location evidence="6">Cell membrane</location>
        <topology evidence="6">Single-pass type I membrane protein</topology>
    </subcellularLocation>
</comment>
<comment type="disruption phenotype">
    <text evidence="4">Higher root hair density.</text>
</comment>
<comment type="similarity">
    <text evidence="6">Belongs to the RLP family.</text>
</comment>
<comment type="sequence caution" evidence="6">
    <conflict type="erroneous gene model prediction">
        <sequence resource="EMBL-CDS" id="AEE83340"/>
    </conflict>
</comment>
<comment type="sequence caution" evidence="6">
    <conflict type="erroneous gene model prediction">
        <sequence resource="EMBL-CDS" id="CAB36852"/>
    </conflict>
</comment>
<comment type="sequence caution" evidence="6">
    <conflict type="erroneous gene model prediction">
        <sequence resource="EMBL-CDS" id="CAB78430"/>
    </conflict>
</comment>
<sequence length="813" mass="90390">MHSCSERRMMTVIWSLCLIFCLSNSILAIAKDLCLPDQRDALLEFKNEFYVQEFDPHMKCEKATETWRNKTDCCSWNRVSCDPKTGKVVELDLMSSCLNGPLRSNSSLFRLQHLQSLELSSNNISGILPDSIGNLKYLRSLSFRTCHLFGKIPSSLGSLSYLTHLDLSYNDFTSEGPDSGGNLNRLTDLQLVLLNLSSVTWIDLGSNQLKGMLPSNMSSLSKLVSFDISENSFSGSIPSSLFMIPSLNFSGPLEIGNISSHSELGYLYMGENNFNGPIPGSLSKLVGLRDLSLSFWNTGRGIVDFSIFLHLKSLCSLDLSYLNTRSMVDLSFFSHLMSLDELDLSGINLKISSTLSFPSATGTLILASCNIVEFPKFLENQTSLFYLDISANHIEGQVPEWLWRLPTLSFVNIAQNSFSGELPMLPNSIYSFIASDNQFSGEIPRTVCELVSLNTLVLSNNKFSGSIPRCFENFKTISILHLRNNSLSGVFPKEIISETLTSLDVGHNWLSGQLPKSLIKCTDLEFLNVEDNRINDKFPFWLRSLSNLQILVLRSNEFYGPIFSLEDSLSFPKLRIFDISENHFTGVLPSDYFAGWSAMSSVVDIFDTTPQVHILGVFQGYYHNSVVLTNKGLNMELVGSGFTIYKTIDVSGNRLEGDIPESIGILKELIVLNMSNNAFTGHIPPSLSNLSNLQSLDLSQNRLSGSIPPELGKLTFLEWMNFSYNRLEGPIPQATQIQSQNSSSFAENPGLCGAPFLNKCGGEEEEEEEATKQEEDEDEEKEEKNQVFSWIAAAIGYVPGVFCGLTIAHILTS</sequence>
<dbReference type="EMBL" id="AL035528">
    <property type="protein sequence ID" value="CAB36852.1"/>
    <property type="status" value="ALT_SEQ"/>
    <property type="molecule type" value="Genomic_DNA"/>
</dbReference>
<dbReference type="EMBL" id="AL161537">
    <property type="protein sequence ID" value="CAB78430.1"/>
    <property type="status" value="ALT_SEQ"/>
    <property type="molecule type" value="Genomic_DNA"/>
</dbReference>
<dbReference type="EMBL" id="CP002687">
    <property type="protein sequence ID" value="AEE83340.1"/>
    <property type="status" value="ALT_SEQ"/>
    <property type="molecule type" value="Genomic_DNA"/>
</dbReference>
<dbReference type="PIR" id="T05257">
    <property type="entry name" value="T05257"/>
</dbReference>
<dbReference type="RefSeq" id="NP_193124.2">
    <property type="nucleotide sequence ID" value="NM_117462.2"/>
</dbReference>
<dbReference type="SMR" id="F4JTU7"/>
<dbReference type="STRING" id="3702.F4JTU7"/>
<dbReference type="GlyCosmos" id="F4JTU7">
    <property type="glycosylation" value="13 sites, No reported glycans"/>
</dbReference>
<dbReference type="GlyGen" id="F4JTU7">
    <property type="glycosylation" value="13 sites"/>
</dbReference>
<dbReference type="GeneID" id="827022"/>
<dbReference type="KEGG" id="ath:AT4G13880"/>
<dbReference type="Araport" id="AT4G13880"/>
<dbReference type="TAIR" id="AT4G13880"/>
<dbReference type="eggNOG" id="KOG0619">
    <property type="taxonomic scope" value="Eukaryota"/>
</dbReference>
<dbReference type="HOGENOM" id="CLU_000288_18_3_1"/>
<dbReference type="InParanoid" id="F4JTU7"/>
<dbReference type="PRO" id="PR:F4JTU7"/>
<dbReference type="Proteomes" id="UP000006548">
    <property type="component" value="Chromosome 4"/>
</dbReference>
<dbReference type="ExpressionAtlas" id="F4JTU7">
    <property type="expression patterns" value="baseline and differential"/>
</dbReference>
<dbReference type="GO" id="GO:0005886">
    <property type="term" value="C:plasma membrane"/>
    <property type="evidence" value="ECO:0007669"/>
    <property type="project" value="UniProtKB-SubCell"/>
</dbReference>
<dbReference type="GO" id="GO:0048767">
    <property type="term" value="P:root hair elongation"/>
    <property type="evidence" value="ECO:0000315"/>
    <property type="project" value="UniProtKB"/>
</dbReference>
<dbReference type="FunFam" id="3.80.10.10:FF:000111">
    <property type="entry name" value="LRR receptor-like serine/threonine-protein kinase ERECTA"/>
    <property type="match status" value="1"/>
</dbReference>
<dbReference type="FunFam" id="3.80.10.10:FF:000095">
    <property type="entry name" value="LRR receptor-like serine/threonine-protein kinase GSO1"/>
    <property type="match status" value="1"/>
</dbReference>
<dbReference type="FunFam" id="3.80.10.10:FF:000400">
    <property type="entry name" value="Nuclear pore complex protein NUP107"/>
    <property type="match status" value="1"/>
</dbReference>
<dbReference type="Gene3D" id="3.80.10.10">
    <property type="entry name" value="Ribonuclease Inhibitor"/>
    <property type="match status" value="4"/>
</dbReference>
<dbReference type="InterPro" id="IPR001611">
    <property type="entry name" value="Leu-rich_rpt"/>
</dbReference>
<dbReference type="InterPro" id="IPR003591">
    <property type="entry name" value="Leu-rich_rpt_typical-subtyp"/>
</dbReference>
<dbReference type="InterPro" id="IPR032675">
    <property type="entry name" value="LRR_dom_sf"/>
</dbReference>
<dbReference type="InterPro" id="IPR013210">
    <property type="entry name" value="LRR_N_plant-typ"/>
</dbReference>
<dbReference type="InterPro" id="IPR046956">
    <property type="entry name" value="RLP23-like"/>
</dbReference>
<dbReference type="PANTHER" id="PTHR48061:SF12">
    <property type="entry name" value="DISEASE RESISTANCE LIKE PROTEIN"/>
    <property type="match status" value="1"/>
</dbReference>
<dbReference type="PANTHER" id="PTHR48061">
    <property type="entry name" value="LEUCINE-RICH REPEAT RECEPTOR PROTEIN KINASE EMS1-LIKE-RELATED"/>
    <property type="match status" value="1"/>
</dbReference>
<dbReference type="Pfam" id="PF00560">
    <property type="entry name" value="LRR_1"/>
    <property type="match status" value="5"/>
</dbReference>
<dbReference type="Pfam" id="PF13516">
    <property type="entry name" value="LRR_6"/>
    <property type="match status" value="1"/>
</dbReference>
<dbReference type="Pfam" id="PF13855">
    <property type="entry name" value="LRR_8"/>
    <property type="match status" value="1"/>
</dbReference>
<dbReference type="Pfam" id="PF08263">
    <property type="entry name" value="LRRNT_2"/>
    <property type="match status" value="1"/>
</dbReference>
<dbReference type="PRINTS" id="PR00019">
    <property type="entry name" value="LEURICHRPT"/>
</dbReference>
<dbReference type="SMART" id="SM00369">
    <property type="entry name" value="LRR_TYP"/>
    <property type="match status" value="7"/>
</dbReference>
<dbReference type="SUPFAM" id="SSF52058">
    <property type="entry name" value="L domain-like"/>
    <property type="match status" value="2"/>
</dbReference>
<dbReference type="PROSITE" id="PS51450">
    <property type="entry name" value="LRR"/>
    <property type="match status" value="11"/>
</dbReference>